<evidence type="ECO:0000255" key="1">
    <source>
        <dbReference type="HAMAP-Rule" id="MF_01343"/>
    </source>
</evidence>
<evidence type="ECO:0000305" key="2"/>
<dbReference type="EMBL" id="CP000911">
    <property type="protein sequence ID" value="ABY39015.1"/>
    <property type="molecule type" value="Genomic_DNA"/>
</dbReference>
<dbReference type="RefSeq" id="WP_002965230.1">
    <property type="nucleotide sequence ID" value="NC_010169.1"/>
</dbReference>
<dbReference type="SMR" id="B0CK14"/>
<dbReference type="GeneID" id="97534579"/>
<dbReference type="KEGG" id="bmt:BSUIS_A2005"/>
<dbReference type="HOGENOM" id="CLU_148518_0_0_5"/>
<dbReference type="Proteomes" id="UP000008545">
    <property type="component" value="Chromosome I"/>
</dbReference>
<dbReference type="GO" id="GO:0022627">
    <property type="term" value="C:cytosolic small ribosomal subunit"/>
    <property type="evidence" value="ECO:0007669"/>
    <property type="project" value="TreeGrafter"/>
</dbReference>
<dbReference type="GO" id="GO:0019843">
    <property type="term" value="F:rRNA binding"/>
    <property type="evidence" value="ECO:0007669"/>
    <property type="project" value="UniProtKB-UniRule"/>
</dbReference>
<dbReference type="GO" id="GO:0003735">
    <property type="term" value="F:structural constituent of ribosome"/>
    <property type="evidence" value="ECO:0007669"/>
    <property type="project" value="InterPro"/>
</dbReference>
<dbReference type="GO" id="GO:0006412">
    <property type="term" value="P:translation"/>
    <property type="evidence" value="ECO:0007669"/>
    <property type="project" value="UniProtKB-UniRule"/>
</dbReference>
<dbReference type="CDD" id="cd00353">
    <property type="entry name" value="Ribosomal_S15p_S13e"/>
    <property type="match status" value="1"/>
</dbReference>
<dbReference type="FunFam" id="1.10.287.10:FF:000002">
    <property type="entry name" value="30S ribosomal protein S15"/>
    <property type="match status" value="1"/>
</dbReference>
<dbReference type="Gene3D" id="6.10.250.3130">
    <property type="match status" value="1"/>
</dbReference>
<dbReference type="Gene3D" id="1.10.287.10">
    <property type="entry name" value="S15/NS1, RNA-binding"/>
    <property type="match status" value="1"/>
</dbReference>
<dbReference type="HAMAP" id="MF_01343_B">
    <property type="entry name" value="Ribosomal_uS15_B"/>
    <property type="match status" value="1"/>
</dbReference>
<dbReference type="InterPro" id="IPR000589">
    <property type="entry name" value="Ribosomal_uS15"/>
</dbReference>
<dbReference type="InterPro" id="IPR005290">
    <property type="entry name" value="Ribosomal_uS15_bac-type"/>
</dbReference>
<dbReference type="InterPro" id="IPR009068">
    <property type="entry name" value="uS15_NS1_RNA-bd_sf"/>
</dbReference>
<dbReference type="NCBIfam" id="TIGR00952">
    <property type="entry name" value="S15_bact"/>
    <property type="match status" value="1"/>
</dbReference>
<dbReference type="PANTHER" id="PTHR23321">
    <property type="entry name" value="RIBOSOMAL PROTEIN S15, BACTERIAL AND ORGANELLAR"/>
    <property type="match status" value="1"/>
</dbReference>
<dbReference type="PANTHER" id="PTHR23321:SF26">
    <property type="entry name" value="SMALL RIBOSOMAL SUBUNIT PROTEIN US15M"/>
    <property type="match status" value="1"/>
</dbReference>
<dbReference type="Pfam" id="PF00312">
    <property type="entry name" value="Ribosomal_S15"/>
    <property type="match status" value="1"/>
</dbReference>
<dbReference type="SMART" id="SM01387">
    <property type="entry name" value="Ribosomal_S15"/>
    <property type="match status" value="1"/>
</dbReference>
<dbReference type="SUPFAM" id="SSF47060">
    <property type="entry name" value="S15/NS1 RNA-binding domain"/>
    <property type="match status" value="1"/>
</dbReference>
<dbReference type="PROSITE" id="PS00362">
    <property type="entry name" value="RIBOSOMAL_S15"/>
    <property type="match status" value="1"/>
</dbReference>
<comment type="function">
    <text evidence="1">One of the primary rRNA binding proteins, it binds directly to 16S rRNA where it helps nucleate assembly of the platform of the 30S subunit by binding and bridging several RNA helices of the 16S rRNA.</text>
</comment>
<comment type="function">
    <text evidence="1">Forms an intersubunit bridge (bridge B4) with the 23S rRNA of the 50S subunit in the ribosome.</text>
</comment>
<comment type="subunit">
    <text evidence="1">Part of the 30S ribosomal subunit. Forms a bridge to the 50S subunit in the 70S ribosome, contacting the 23S rRNA.</text>
</comment>
<comment type="similarity">
    <text evidence="1">Belongs to the universal ribosomal protein uS15 family.</text>
</comment>
<sequence>MSITAERKQALIKEYATKEGDTGSPEVQVAVLSERIANLTEHFKGHKNDNHSRRGLLKLVSQRRRLLDYVKGVDHARYQALITRLGLRR</sequence>
<gene>
    <name evidence="1" type="primary">rpsO</name>
    <name type="ordered locus">BSUIS_A2005</name>
</gene>
<keyword id="KW-0687">Ribonucleoprotein</keyword>
<keyword id="KW-0689">Ribosomal protein</keyword>
<keyword id="KW-0694">RNA-binding</keyword>
<keyword id="KW-0699">rRNA-binding</keyword>
<protein>
    <recommendedName>
        <fullName evidence="1">Small ribosomal subunit protein uS15</fullName>
    </recommendedName>
    <alternativeName>
        <fullName evidence="2">30S ribosomal protein S15</fullName>
    </alternativeName>
</protein>
<reference key="1">
    <citation type="submission" date="2007-12" db="EMBL/GenBank/DDBJ databases">
        <title>Brucella suis ATCC 23445 whole genome shotgun sequencing project.</title>
        <authorList>
            <person name="Setubal J.C."/>
            <person name="Bowns C."/>
            <person name="Boyle S."/>
            <person name="Crasta O.R."/>
            <person name="Czar M.J."/>
            <person name="Dharmanolla C."/>
            <person name="Gillespie J.J."/>
            <person name="Kenyon R.W."/>
            <person name="Lu J."/>
            <person name="Mane S."/>
            <person name="Mohapatra S."/>
            <person name="Nagrani S."/>
            <person name="Purkayastha A."/>
            <person name="Rajasimha H.K."/>
            <person name="Shallom J.M."/>
            <person name="Shallom S."/>
            <person name="Shukla M."/>
            <person name="Snyder E.E."/>
            <person name="Sobral B.W."/>
            <person name="Wattam A.R."/>
            <person name="Will R."/>
            <person name="Williams K."/>
            <person name="Yoo H."/>
            <person name="Bruce D."/>
            <person name="Detter C."/>
            <person name="Munk C."/>
            <person name="Brettin T.S."/>
        </authorList>
    </citation>
    <scope>NUCLEOTIDE SEQUENCE [LARGE SCALE GENOMIC DNA]</scope>
    <source>
        <strain>ATCC 23445 / NCTC 10510</strain>
    </source>
</reference>
<accession>B0CK14</accession>
<organism>
    <name type="scientific">Brucella suis (strain ATCC 23445 / NCTC 10510)</name>
    <dbReference type="NCBI Taxonomy" id="470137"/>
    <lineage>
        <taxon>Bacteria</taxon>
        <taxon>Pseudomonadati</taxon>
        <taxon>Pseudomonadota</taxon>
        <taxon>Alphaproteobacteria</taxon>
        <taxon>Hyphomicrobiales</taxon>
        <taxon>Brucellaceae</taxon>
        <taxon>Brucella/Ochrobactrum group</taxon>
        <taxon>Brucella</taxon>
    </lineage>
</organism>
<proteinExistence type="inferred from homology"/>
<feature type="chain" id="PRO_1000086791" description="Small ribosomal subunit protein uS15">
    <location>
        <begin position="1"/>
        <end position="89"/>
    </location>
</feature>
<name>RS15_BRUSI</name>